<gene>
    <name evidence="1" type="primary">ndhB2</name>
</gene>
<protein>
    <recommendedName>
        <fullName evidence="1">NAD(P)H-quinone oxidoreductase subunit 2 B, chloroplastic</fullName>
        <ecNumber evidence="1">7.1.1.-</ecNumber>
    </recommendedName>
    <alternativeName>
        <fullName evidence="1">NAD(P)H dehydrogenase, subunit 2 B</fullName>
    </alternativeName>
    <alternativeName>
        <fullName evidence="1">NADH-plastoquinone oxidoreductase subunit 2 B</fullName>
    </alternativeName>
</protein>
<organism>
    <name type="scientific">Oryza nivara</name>
    <name type="common">Indian wild rice</name>
    <name type="synonym">Oryza sativa f. spontanea</name>
    <dbReference type="NCBI Taxonomy" id="4536"/>
    <lineage>
        <taxon>Eukaryota</taxon>
        <taxon>Viridiplantae</taxon>
        <taxon>Streptophyta</taxon>
        <taxon>Embryophyta</taxon>
        <taxon>Tracheophyta</taxon>
        <taxon>Spermatophyta</taxon>
        <taxon>Magnoliopsida</taxon>
        <taxon>Liliopsida</taxon>
        <taxon>Poales</taxon>
        <taxon>Poaceae</taxon>
        <taxon>BOP clade</taxon>
        <taxon>Oryzoideae</taxon>
        <taxon>Oryzeae</taxon>
        <taxon>Oryzinae</taxon>
        <taxon>Oryza</taxon>
    </lineage>
</organism>
<geneLocation type="chloroplast"/>
<feature type="chain" id="PRO_0000391296" description="NAD(P)H-quinone oxidoreductase subunit 2 B, chloroplastic">
    <location>
        <begin position="1"/>
        <end position="510"/>
    </location>
</feature>
<feature type="transmembrane region" description="Helical" evidence="1">
    <location>
        <begin position="31"/>
        <end position="51"/>
    </location>
</feature>
<feature type="transmembrane region" description="Helical" evidence="1">
    <location>
        <begin position="59"/>
        <end position="79"/>
    </location>
</feature>
<feature type="transmembrane region" description="Helical" evidence="1">
    <location>
        <begin position="99"/>
        <end position="119"/>
    </location>
</feature>
<feature type="transmembrane region" description="Helical" evidence="1">
    <location>
        <begin position="124"/>
        <end position="144"/>
    </location>
</feature>
<feature type="transmembrane region" description="Helical" evidence="1">
    <location>
        <begin position="149"/>
        <end position="169"/>
    </location>
</feature>
<feature type="transmembrane region" description="Helical" evidence="1">
    <location>
        <begin position="183"/>
        <end position="203"/>
    </location>
</feature>
<feature type="transmembrane region" description="Helical" evidence="1">
    <location>
        <begin position="229"/>
        <end position="249"/>
    </location>
</feature>
<feature type="transmembrane region" description="Helical" evidence="1">
    <location>
        <begin position="295"/>
        <end position="315"/>
    </location>
</feature>
<feature type="transmembrane region" description="Helical" evidence="1">
    <location>
        <begin position="323"/>
        <end position="343"/>
    </location>
</feature>
<feature type="transmembrane region" description="Helical" evidence="1">
    <location>
        <begin position="354"/>
        <end position="374"/>
    </location>
</feature>
<feature type="transmembrane region" description="Helical" evidence="1">
    <location>
        <begin position="395"/>
        <end position="415"/>
    </location>
</feature>
<feature type="transmembrane region" description="Helical" evidence="1">
    <location>
        <begin position="418"/>
        <end position="438"/>
    </location>
</feature>
<comment type="function">
    <text evidence="1">NDH shuttles electrons from NAD(P)H:plastoquinone, via FMN and iron-sulfur (Fe-S) centers, to quinones in the photosynthetic chain and possibly in a chloroplast respiratory chain. The immediate electron acceptor for the enzyme in this species is believed to be plastoquinone. Couples the redox reaction to proton translocation, and thus conserves the redox energy in a proton gradient.</text>
</comment>
<comment type="catalytic activity">
    <reaction evidence="1">
        <text>a plastoquinone + NADH + (n+1) H(+)(in) = a plastoquinol + NAD(+) + n H(+)(out)</text>
        <dbReference type="Rhea" id="RHEA:42608"/>
        <dbReference type="Rhea" id="RHEA-COMP:9561"/>
        <dbReference type="Rhea" id="RHEA-COMP:9562"/>
        <dbReference type="ChEBI" id="CHEBI:15378"/>
        <dbReference type="ChEBI" id="CHEBI:17757"/>
        <dbReference type="ChEBI" id="CHEBI:57540"/>
        <dbReference type="ChEBI" id="CHEBI:57945"/>
        <dbReference type="ChEBI" id="CHEBI:62192"/>
    </reaction>
</comment>
<comment type="catalytic activity">
    <reaction evidence="1">
        <text>a plastoquinone + NADPH + (n+1) H(+)(in) = a plastoquinol + NADP(+) + n H(+)(out)</text>
        <dbReference type="Rhea" id="RHEA:42612"/>
        <dbReference type="Rhea" id="RHEA-COMP:9561"/>
        <dbReference type="Rhea" id="RHEA-COMP:9562"/>
        <dbReference type="ChEBI" id="CHEBI:15378"/>
        <dbReference type="ChEBI" id="CHEBI:17757"/>
        <dbReference type="ChEBI" id="CHEBI:57783"/>
        <dbReference type="ChEBI" id="CHEBI:58349"/>
        <dbReference type="ChEBI" id="CHEBI:62192"/>
    </reaction>
</comment>
<comment type="subunit">
    <text evidence="1">NDH is composed of at least 16 different subunits, 5 of which are encoded in the nucleus.</text>
</comment>
<comment type="subcellular location">
    <subcellularLocation>
        <location evidence="1">Plastid</location>
        <location evidence="1">Chloroplast thylakoid membrane</location>
        <topology evidence="1">Multi-pass membrane protein</topology>
    </subcellularLocation>
</comment>
<comment type="similarity">
    <text evidence="1">Belongs to the complex I subunit 2 family.</text>
</comment>
<name>NU2C2_ORYNI</name>
<dbReference type="EC" id="7.1.1.-" evidence="1"/>
<dbReference type="EMBL" id="AP006728">
    <property type="protein sequence ID" value="BAD26861.1"/>
    <property type="molecule type" value="Genomic_DNA"/>
</dbReference>
<dbReference type="SMR" id="P0CD17"/>
<dbReference type="STRING" id="4536.P0CD17"/>
<dbReference type="Proteomes" id="UP000006591">
    <property type="component" value="Chloroplast"/>
</dbReference>
<dbReference type="GO" id="GO:0009535">
    <property type="term" value="C:chloroplast thylakoid membrane"/>
    <property type="evidence" value="ECO:0007669"/>
    <property type="project" value="UniProtKB-SubCell"/>
</dbReference>
<dbReference type="GO" id="GO:0008137">
    <property type="term" value="F:NADH dehydrogenase (ubiquinone) activity"/>
    <property type="evidence" value="ECO:0007669"/>
    <property type="project" value="InterPro"/>
</dbReference>
<dbReference type="GO" id="GO:0048038">
    <property type="term" value="F:quinone binding"/>
    <property type="evidence" value="ECO:0007669"/>
    <property type="project" value="UniProtKB-KW"/>
</dbReference>
<dbReference type="GO" id="GO:0042773">
    <property type="term" value="P:ATP synthesis coupled electron transport"/>
    <property type="evidence" value="ECO:0007669"/>
    <property type="project" value="InterPro"/>
</dbReference>
<dbReference type="GO" id="GO:0019684">
    <property type="term" value="P:photosynthesis, light reaction"/>
    <property type="evidence" value="ECO:0007669"/>
    <property type="project" value="UniProtKB-UniRule"/>
</dbReference>
<dbReference type="HAMAP" id="MF_00445">
    <property type="entry name" value="NDH1_NuoN_1"/>
    <property type="match status" value="1"/>
</dbReference>
<dbReference type="InterPro" id="IPR010096">
    <property type="entry name" value="NADH-Q_OxRdtase_suN/2"/>
</dbReference>
<dbReference type="InterPro" id="IPR001750">
    <property type="entry name" value="ND/Mrp_TM"/>
</dbReference>
<dbReference type="InterPro" id="IPR045693">
    <property type="entry name" value="Ndh2_N"/>
</dbReference>
<dbReference type="NCBIfam" id="TIGR01770">
    <property type="entry name" value="NDH_I_N"/>
    <property type="match status" value="1"/>
</dbReference>
<dbReference type="NCBIfam" id="NF002701">
    <property type="entry name" value="PRK02504.1"/>
    <property type="match status" value="1"/>
</dbReference>
<dbReference type="PANTHER" id="PTHR22773">
    <property type="entry name" value="NADH DEHYDROGENASE"/>
    <property type="match status" value="1"/>
</dbReference>
<dbReference type="Pfam" id="PF19530">
    <property type="entry name" value="Ndh2_N"/>
    <property type="match status" value="1"/>
</dbReference>
<dbReference type="Pfam" id="PF00361">
    <property type="entry name" value="Proton_antipo_M"/>
    <property type="match status" value="1"/>
</dbReference>
<dbReference type="PRINTS" id="PR01434">
    <property type="entry name" value="NADHDHGNASE5"/>
</dbReference>
<sequence>MIWHVQNENFILDSTRIFMKAFHLLLFQGSFIFPECILIFGLILLLMIDLTSDQKDRPWFYFISSTSLVISITALLFRWREEPIISFSGNFQTNNFNEIFQFLILLCSTLCIPLSVEYIECTEMAITEFLLFVLTATLGGMFLCGANDLITIFVAPECFSLCSYLLSGYTKRDLRSNEATMKYLLMGGASSSILVHGFSWLYGSSGGEIELQEIVNGLINTQMYNSPGISIALISITVGLGFKLSPAPFHQWTPDVYEGSPTPVVAFLSVTSKVAASASATRILDIPFYFSSNEWHLLLEILAILSMILGNLLAITQTSMKRMLAYSSIGQIGYVIIGIIVGDSNDGYASMITYMLFYISMNLGTFACIVLFGLRTGTDNIRDYAGLYTKDPFLALSLALCLLSLGGLPPLAGFFGKLYLFWCGWQAGLYFLVSIGLLTSVLSIYYYLKIVKLLMTGRNQEITPYVRNYRRSPLRSNNSIELSMTVCVIASTIPGISMNPILAIAQDTLF</sequence>
<keyword id="KW-0150">Chloroplast</keyword>
<keyword id="KW-0472">Membrane</keyword>
<keyword id="KW-0520">NAD</keyword>
<keyword id="KW-0521">NADP</keyword>
<keyword id="KW-0934">Plastid</keyword>
<keyword id="KW-0618">Plastoquinone</keyword>
<keyword id="KW-0874">Quinone</keyword>
<keyword id="KW-1185">Reference proteome</keyword>
<keyword id="KW-0793">Thylakoid</keyword>
<keyword id="KW-1278">Translocase</keyword>
<keyword id="KW-0812">Transmembrane</keyword>
<keyword id="KW-1133">Transmembrane helix</keyword>
<keyword id="KW-0813">Transport</keyword>
<proteinExistence type="inferred from homology"/>
<accession>P0CD17</accession>
<accession>Q6ENC2</accession>
<reference key="1">
    <citation type="journal article" date="2004" name="Gene">
        <title>The complete nucleotide sequence of wild rice (Oryza nivara) chloroplast genome: first genome wide comparative sequence analysis of wild and cultivated rice.</title>
        <authorList>
            <person name="Masood M.S."/>
            <person name="Nishikawa T."/>
            <person name="Fukuoka S."/>
            <person name="Njenga P.K."/>
            <person name="Tsudzuki T."/>
            <person name="Kadowaki K."/>
        </authorList>
    </citation>
    <scope>NUCLEOTIDE SEQUENCE [LARGE SCALE GENOMIC DNA]</scope>
    <source>
        <strain evidence="2">cv. SL10</strain>
    </source>
</reference>
<evidence type="ECO:0000255" key="1">
    <source>
        <dbReference type="HAMAP-Rule" id="MF_00445"/>
    </source>
</evidence>
<evidence type="ECO:0000312" key="2">
    <source>
        <dbReference type="Proteomes" id="UP000006591"/>
    </source>
</evidence>